<comment type="function">
    <text evidence="1">Catalyzes the phosphorylation of the hydroxyl group of 4-methyl-5-beta-hydroxyethylthiazole (THZ).</text>
</comment>
<comment type="catalytic activity">
    <reaction evidence="1">
        <text>5-(2-hydroxyethyl)-4-methylthiazole + ATP = 4-methyl-5-(2-phosphooxyethyl)-thiazole + ADP + H(+)</text>
        <dbReference type="Rhea" id="RHEA:24212"/>
        <dbReference type="ChEBI" id="CHEBI:15378"/>
        <dbReference type="ChEBI" id="CHEBI:17957"/>
        <dbReference type="ChEBI" id="CHEBI:30616"/>
        <dbReference type="ChEBI" id="CHEBI:58296"/>
        <dbReference type="ChEBI" id="CHEBI:456216"/>
        <dbReference type="EC" id="2.7.1.50"/>
    </reaction>
</comment>
<comment type="cofactor">
    <cofactor evidence="1">
        <name>Mg(2+)</name>
        <dbReference type="ChEBI" id="CHEBI:18420"/>
    </cofactor>
</comment>
<comment type="pathway">
    <text evidence="1">Cofactor biosynthesis; thiamine diphosphate biosynthesis; 4-methyl-5-(2-phosphoethyl)-thiazole from 5-(2-hydroxyethyl)-4-methylthiazole: step 1/1.</text>
</comment>
<comment type="similarity">
    <text evidence="1">Belongs to the Thz kinase family.</text>
</comment>
<gene>
    <name evidence="1" type="primary">thiM</name>
    <name type="ordered locus">HPAG1_0830</name>
</gene>
<protein>
    <recommendedName>
        <fullName evidence="1">Hydroxyethylthiazole kinase</fullName>
        <ecNumber evidence="1">2.7.1.50</ecNumber>
    </recommendedName>
    <alternativeName>
        <fullName evidence="1">4-methyl-5-beta-hydroxyethylthiazole kinase</fullName>
        <shortName evidence="1">TH kinase</shortName>
        <shortName evidence="1">Thz kinase</shortName>
    </alternativeName>
</protein>
<proteinExistence type="inferred from homology"/>
<feature type="chain" id="PRO_0000336561" description="Hydroxyethylthiazole kinase">
    <location>
        <begin position="1"/>
        <end position="260"/>
    </location>
</feature>
<feature type="binding site" evidence="1">
    <location>
        <position position="38"/>
    </location>
    <ligand>
        <name>substrate</name>
    </ligand>
</feature>
<feature type="binding site" evidence="1">
    <location>
        <position position="114"/>
    </location>
    <ligand>
        <name>ATP</name>
        <dbReference type="ChEBI" id="CHEBI:30616"/>
    </ligand>
</feature>
<feature type="binding site" evidence="1">
    <location>
        <position position="159"/>
    </location>
    <ligand>
        <name>ATP</name>
        <dbReference type="ChEBI" id="CHEBI:30616"/>
    </ligand>
</feature>
<feature type="binding site" evidence="1">
    <location>
        <position position="186"/>
    </location>
    <ligand>
        <name>substrate</name>
    </ligand>
</feature>
<dbReference type="EC" id="2.7.1.50" evidence="1"/>
<dbReference type="EMBL" id="CP000241">
    <property type="protein sequence ID" value="ABF84897.1"/>
    <property type="molecule type" value="Genomic_DNA"/>
</dbReference>
<dbReference type="RefSeq" id="WP_000243080.1">
    <property type="nucleotide sequence ID" value="NC_008086.1"/>
</dbReference>
<dbReference type="SMR" id="Q1CT25"/>
<dbReference type="KEGG" id="hpa:HPAG1_0830"/>
<dbReference type="HOGENOM" id="CLU_019943_0_1_7"/>
<dbReference type="UniPathway" id="UPA00060">
    <property type="reaction ID" value="UER00139"/>
</dbReference>
<dbReference type="GO" id="GO:0005524">
    <property type="term" value="F:ATP binding"/>
    <property type="evidence" value="ECO:0007669"/>
    <property type="project" value="UniProtKB-UniRule"/>
</dbReference>
<dbReference type="GO" id="GO:0004417">
    <property type="term" value="F:hydroxyethylthiazole kinase activity"/>
    <property type="evidence" value="ECO:0007669"/>
    <property type="project" value="UniProtKB-UniRule"/>
</dbReference>
<dbReference type="GO" id="GO:0000287">
    <property type="term" value="F:magnesium ion binding"/>
    <property type="evidence" value="ECO:0007669"/>
    <property type="project" value="UniProtKB-UniRule"/>
</dbReference>
<dbReference type="GO" id="GO:0009228">
    <property type="term" value="P:thiamine biosynthetic process"/>
    <property type="evidence" value="ECO:0007669"/>
    <property type="project" value="UniProtKB-KW"/>
</dbReference>
<dbReference type="GO" id="GO:0009229">
    <property type="term" value="P:thiamine diphosphate biosynthetic process"/>
    <property type="evidence" value="ECO:0007669"/>
    <property type="project" value="UniProtKB-UniRule"/>
</dbReference>
<dbReference type="CDD" id="cd01170">
    <property type="entry name" value="THZ_kinase"/>
    <property type="match status" value="1"/>
</dbReference>
<dbReference type="Gene3D" id="3.40.1190.20">
    <property type="match status" value="1"/>
</dbReference>
<dbReference type="HAMAP" id="MF_00228">
    <property type="entry name" value="Thz_kinase"/>
    <property type="match status" value="1"/>
</dbReference>
<dbReference type="InterPro" id="IPR000417">
    <property type="entry name" value="Hyethyz_kinase"/>
</dbReference>
<dbReference type="InterPro" id="IPR029056">
    <property type="entry name" value="Ribokinase-like"/>
</dbReference>
<dbReference type="NCBIfam" id="NF006830">
    <property type="entry name" value="PRK09355.1"/>
    <property type="match status" value="1"/>
</dbReference>
<dbReference type="NCBIfam" id="TIGR00694">
    <property type="entry name" value="thiM"/>
    <property type="match status" value="1"/>
</dbReference>
<dbReference type="Pfam" id="PF02110">
    <property type="entry name" value="HK"/>
    <property type="match status" value="1"/>
</dbReference>
<dbReference type="PIRSF" id="PIRSF000513">
    <property type="entry name" value="Thz_kinase"/>
    <property type="match status" value="1"/>
</dbReference>
<dbReference type="PRINTS" id="PR01099">
    <property type="entry name" value="HYETHTZKNASE"/>
</dbReference>
<dbReference type="SUPFAM" id="SSF53613">
    <property type="entry name" value="Ribokinase-like"/>
    <property type="match status" value="1"/>
</dbReference>
<accession>Q1CT25</accession>
<sequence>MVLKELRQKRPLVHNITNYVAAQFVANGLLALGASPLMSDAIDEMQDLAKISDALAINIGTINERAILCAKEAIKHYKALNKPIVLDPVGCSASALRHDTSLELLKSGGISALRGNAAELGSLVGISCESKGLDSQDANTPVEIIKRVAQKYFVIAVMTGKTDYVSDGKKVLSITGGSEYLALITGAGCLHTAACASFLGLKKDPLDSMAQLCALYKQASFNAQKKALENNGSNGSFLFYFLDALSLPIKLENSLIKEVL</sequence>
<name>THIM_HELPH</name>
<organism>
    <name type="scientific">Helicobacter pylori (strain HPAG1)</name>
    <dbReference type="NCBI Taxonomy" id="357544"/>
    <lineage>
        <taxon>Bacteria</taxon>
        <taxon>Pseudomonadati</taxon>
        <taxon>Campylobacterota</taxon>
        <taxon>Epsilonproteobacteria</taxon>
        <taxon>Campylobacterales</taxon>
        <taxon>Helicobacteraceae</taxon>
        <taxon>Helicobacter</taxon>
    </lineage>
</organism>
<keyword id="KW-0067">ATP-binding</keyword>
<keyword id="KW-0418">Kinase</keyword>
<keyword id="KW-0460">Magnesium</keyword>
<keyword id="KW-0479">Metal-binding</keyword>
<keyword id="KW-0547">Nucleotide-binding</keyword>
<keyword id="KW-0784">Thiamine biosynthesis</keyword>
<keyword id="KW-0808">Transferase</keyword>
<evidence type="ECO:0000255" key="1">
    <source>
        <dbReference type="HAMAP-Rule" id="MF_00228"/>
    </source>
</evidence>
<reference key="1">
    <citation type="journal article" date="2006" name="Proc. Natl. Acad. Sci. U.S.A.">
        <title>The complete genome sequence of a chronic atrophic gastritis Helicobacter pylori strain: evolution during disease progression.</title>
        <authorList>
            <person name="Oh J.D."/>
            <person name="Kling-Baeckhed H."/>
            <person name="Giannakis M."/>
            <person name="Xu J."/>
            <person name="Fulton R.S."/>
            <person name="Fulton L.A."/>
            <person name="Cordum H.S."/>
            <person name="Wang C."/>
            <person name="Elliott G."/>
            <person name="Edwards J."/>
            <person name="Mardis E.R."/>
            <person name="Engstrand L.G."/>
            <person name="Gordon J.I."/>
        </authorList>
    </citation>
    <scope>NUCLEOTIDE SEQUENCE [LARGE SCALE GENOMIC DNA]</scope>
    <source>
        <strain>HPAG1</strain>
    </source>
</reference>